<gene>
    <name evidence="1" type="primary">rpsD</name>
    <name type="ordered locus">BOV_0823</name>
</gene>
<evidence type="ECO:0000255" key="1">
    <source>
        <dbReference type="HAMAP-Rule" id="MF_01306"/>
    </source>
</evidence>
<evidence type="ECO:0000256" key="2">
    <source>
        <dbReference type="SAM" id="MobiDB-lite"/>
    </source>
</evidence>
<evidence type="ECO:0000305" key="3"/>
<feature type="chain" id="PRO_0000322271" description="Small ribosomal subunit protein uS4">
    <location>
        <begin position="1"/>
        <end position="205"/>
    </location>
</feature>
<feature type="domain" description="S4 RNA-binding" evidence="1">
    <location>
        <begin position="94"/>
        <end position="157"/>
    </location>
</feature>
<feature type="region of interest" description="Disordered" evidence="2">
    <location>
        <begin position="19"/>
        <end position="45"/>
    </location>
</feature>
<organism>
    <name type="scientific">Brucella ovis (strain ATCC 25840 / 63/290 / NCTC 10512)</name>
    <dbReference type="NCBI Taxonomy" id="444178"/>
    <lineage>
        <taxon>Bacteria</taxon>
        <taxon>Pseudomonadati</taxon>
        <taxon>Pseudomonadota</taxon>
        <taxon>Alphaproteobacteria</taxon>
        <taxon>Hyphomicrobiales</taxon>
        <taxon>Brucellaceae</taxon>
        <taxon>Brucella/Ochrobactrum group</taxon>
        <taxon>Brucella</taxon>
    </lineage>
</organism>
<name>RS4_BRUO2</name>
<keyword id="KW-0687">Ribonucleoprotein</keyword>
<keyword id="KW-0689">Ribosomal protein</keyword>
<keyword id="KW-0694">RNA-binding</keyword>
<keyword id="KW-0699">rRNA-binding</keyword>
<sequence length="205" mass="23592">MSKRESAKYKIDRRLGENIWGRPKSPVNRREYGPGQHGQRRKGKLSDFGVQLRAKQKLKGFYGDISEKQFRKTYEEAARRKGDTGENLIGLLESRLDAVVYRAKFVPTIFAARQFINHGHVNVNGRRVNIQSYRLKVGDVVEVREKSKQLAIVLEAVQLAERDVPDYIDVDHNKMVATYNRVPGLSDVPYAVQMEPNLVVEFYSR</sequence>
<reference key="1">
    <citation type="journal article" date="2009" name="PLoS ONE">
        <title>Genome degradation in Brucella ovis corresponds with narrowing of its host range and tissue tropism.</title>
        <authorList>
            <person name="Tsolis R.M."/>
            <person name="Seshadri R."/>
            <person name="Santos R.L."/>
            <person name="Sangari F.J."/>
            <person name="Lobo J.M."/>
            <person name="de Jong M.F."/>
            <person name="Ren Q."/>
            <person name="Myers G."/>
            <person name="Brinkac L.M."/>
            <person name="Nelson W.C."/>
            <person name="Deboy R.T."/>
            <person name="Angiuoli S."/>
            <person name="Khouri H."/>
            <person name="Dimitrov G."/>
            <person name="Robinson J.R."/>
            <person name="Mulligan S."/>
            <person name="Walker R.L."/>
            <person name="Elzer P.E."/>
            <person name="Hassan K.A."/>
            <person name="Paulsen I.T."/>
        </authorList>
    </citation>
    <scope>NUCLEOTIDE SEQUENCE [LARGE SCALE GENOMIC DNA]</scope>
    <source>
        <strain>ATCC 25840 / 63/290 / NCTC 10512</strain>
    </source>
</reference>
<accession>A5VQ09</accession>
<protein>
    <recommendedName>
        <fullName evidence="1">Small ribosomal subunit protein uS4</fullName>
    </recommendedName>
    <alternativeName>
        <fullName evidence="3">30S ribosomal protein S4</fullName>
    </alternativeName>
</protein>
<comment type="function">
    <text evidence="1">One of the primary rRNA binding proteins, it binds directly to 16S rRNA where it nucleates assembly of the body of the 30S subunit.</text>
</comment>
<comment type="function">
    <text evidence="1">With S5 and S12 plays an important role in translational accuracy.</text>
</comment>
<comment type="subunit">
    <text evidence="1">Part of the 30S ribosomal subunit. Contacts protein S5. The interaction surface between S4 and S5 is involved in control of translational fidelity.</text>
</comment>
<comment type="similarity">
    <text evidence="1">Belongs to the universal ribosomal protein uS4 family.</text>
</comment>
<dbReference type="EMBL" id="CP000708">
    <property type="protein sequence ID" value="ABQ61649.1"/>
    <property type="molecule type" value="Genomic_DNA"/>
</dbReference>
<dbReference type="RefSeq" id="WP_002967582.1">
    <property type="nucleotide sequence ID" value="NC_009505.1"/>
</dbReference>
<dbReference type="SMR" id="A5VQ09"/>
<dbReference type="GeneID" id="97533867"/>
<dbReference type="KEGG" id="bov:BOV_0823"/>
<dbReference type="HOGENOM" id="CLU_092403_0_0_5"/>
<dbReference type="PhylomeDB" id="A5VQ09"/>
<dbReference type="Proteomes" id="UP000006383">
    <property type="component" value="Chromosome I"/>
</dbReference>
<dbReference type="GO" id="GO:0015935">
    <property type="term" value="C:small ribosomal subunit"/>
    <property type="evidence" value="ECO:0007669"/>
    <property type="project" value="InterPro"/>
</dbReference>
<dbReference type="GO" id="GO:0019843">
    <property type="term" value="F:rRNA binding"/>
    <property type="evidence" value="ECO:0007669"/>
    <property type="project" value="UniProtKB-UniRule"/>
</dbReference>
<dbReference type="GO" id="GO:0003735">
    <property type="term" value="F:structural constituent of ribosome"/>
    <property type="evidence" value="ECO:0007669"/>
    <property type="project" value="InterPro"/>
</dbReference>
<dbReference type="GO" id="GO:0042274">
    <property type="term" value="P:ribosomal small subunit biogenesis"/>
    <property type="evidence" value="ECO:0007669"/>
    <property type="project" value="TreeGrafter"/>
</dbReference>
<dbReference type="GO" id="GO:0006412">
    <property type="term" value="P:translation"/>
    <property type="evidence" value="ECO:0007669"/>
    <property type="project" value="UniProtKB-UniRule"/>
</dbReference>
<dbReference type="CDD" id="cd00165">
    <property type="entry name" value="S4"/>
    <property type="match status" value="1"/>
</dbReference>
<dbReference type="FunFam" id="3.10.290.10:FF:000001">
    <property type="entry name" value="30S ribosomal protein S4"/>
    <property type="match status" value="1"/>
</dbReference>
<dbReference type="Gene3D" id="1.10.1050.10">
    <property type="entry name" value="Ribosomal Protein S4 Delta 41, Chain A, domain 1"/>
    <property type="match status" value="1"/>
</dbReference>
<dbReference type="Gene3D" id="3.10.290.10">
    <property type="entry name" value="RNA-binding S4 domain"/>
    <property type="match status" value="1"/>
</dbReference>
<dbReference type="HAMAP" id="MF_01306_B">
    <property type="entry name" value="Ribosomal_uS4_B"/>
    <property type="match status" value="1"/>
</dbReference>
<dbReference type="InterPro" id="IPR022801">
    <property type="entry name" value="Ribosomal_uS4"/>
</dbReference>
<dbReference type="InterPro" id="IPR005709">
    <property type="entry name" value="Ribosomal_uS4_bac-type"/>
</dbReference>
<dbReference type="InterPro" id="IPR018079">
    <property type="entry name" value="Ribosomal_uS4_CS"/>
</dbReference>
<dbReference type="InterPro" id="IPR001912">
    <property type="entry name" value="Ribosomal_uS4_N"/>
</dbReference>
<dbReference type="InterPro" id="IPR002942">
    <property type="entry name" value="S4_RNA-bd"/>
</dbReference>
<dbReference type="InterPro" id="IPR036986">
    <property type="entry name" value="S4_RNA-bd_sf"/>
</dbReference>
<dbReference type="NCBIfam" id="NF003717">
    <property type="entry name" value="PRK05327.1"/>
    <property type="match status" value="1"/>
</dbReference>
<dbReference type="NCBIfam" id="TIGR01017">
    <property type="entry name" value="rpsD_bact"/>
    <property type="match status" value="1"/>
</dbReference>
<dbReference type="PANTHER" id="PTHR11831">
    <property type="entry name" value="30S 40S RIBOSOMAL PROTEIN"/>
    <property type="match status" value="1"/>
</dbReference>
<dbReference type="PANTHER" id="PTHR11831:SF4">
    <property type="entry name" value="SMALL RIBOSOMAL SUBUNIT PROTEIN US4M"/>
    <property type="match status" value="1"/>
</dbReference>
<dbReference type="Pfam" id="PF00163">
    <property type="entry name" value="Ribosomal_S4"/>
    <property type="match status" value="1"/>
</dbReference>
<dbReference type="Pfam" id="PF01479">
    <property type="entry name" value="S4"/>
    <property type="match status" value="1"/>
</dbReference>
<dbReference type="SMART" id="SM01390">
    <property type="entry name" value="Ribosomal_S4"/>
    <property type="match status" value="1"/>
</dbReference>
<dbReference type="SMART" id="SM00363">
    <property type="entry name" value="S4"/>
    <property type="match status" value="1"/>
</dbReference>
<dbReference type="SUPFAM" id="SSF55174">
    <property type="entry name" value="Alpha-L RNA-binding motif"/>
    <property type="match status" value="1"/>
</dbReference>
<dbReference type="PROSITE" id="PS00632">
    <property type="entry name" value="RIBOSOMAL_S4"/>
    <property type="match status" value="1"/>
</dbReference>
<dbReference type="PROSITE" id="PS50889">
    <property type="entry name" value="S4"/>
    <property type="match status" value="1"/>
</dbReference>
<proteinExistence type="inferred from homology"/>